<accession>B3CN34</accession>
<comment type="similarity">
    <text evidence="1">Belongs to the universal ribosomal protein uL29 family.</text>
</comment>
<dbReference type="EMBL" id="AM999887">
    <property type="protein sequence ID" value="CAQ55282.1"/>
    <property type="molecule type" value="Genomic_DNA"/>
</dbReference>
<dbReference type="RefSeq" id="WP_007302540.1">
    <property type="nucleotide sequence ID" value="NC_010981.1"/>
</dbReference>
<dbReference type="SMR" id="B3CN34"/>
<dbReference type="KEGG" id="wpi:WP1174"/>
<dbReference type="eggNOG" id="COG0255">
    <property type="taxonomic scope" value="Bacteria"/>
</dbReference>
<dbReference type="HOGENOM" id="CLU_158491_4_0_5"/>
<dbReference type="Proteomes" id="UP000008814">
    <property type="component" value="Chromosome"/>
</dbReference>
<dbReference type="GO" id="GO:1990904">
    <property type="term" value="C:ribonucleoprotein complex"/>
    <property type="evidence" value="ECO:0007669"/>
    <property type="project" value="UniProtKB-KW"/>
</dbReference>
<dbReference type="GO" id="GO:0005840">
    <property type="term" value="C:ribosome"/>
    <property type="evidence" value="ECO:0007669"/>
    <property type="project" value="UniProtKB-KW"/>
</dbReference>
<dbReference type="GO" id="GO:0003735">
    <property type="term" value="F:structural constituent of ribosome"/>
    <property type="evidence" value="ECO:0007669"/>
    <property type="project" value="InterPro"/>
</dbReference>
<dbReference type="GO" id="GO:0006412">
    <property type="term" value="P:translation"/>
    <property type="evidence" value="ECO:0007669"/>
    <property type="project" value="UniProtKB-UniRule"/>
</dbReference>
<dbReference type="CDD" id="cd00427">
    <property type="entry name" value="Ribosomal_L29_HIP"/>
    <property type="match status" value="1"/>
</dbReference>
<dbReference type="Gene3D" id="1.10.287.310">
    <property type="match status" value="1"/>
</dbReference>
<dbReference type="HAMAP" id="MF_00374">
    <property type="entry name" value="Ribosomal_uL29"/>
    <property type="match status" value="1"/>
</dbReference>
<dbReference type="InterPro" id="IPR001854">
    <property type="entry name" value="Ribosomal_uL29"/>
</dbReference>
<dbReference type="InterPro" id="IPR036049">
    <property type="entry name" value="Ribosomal_uL29_sf"/>
</dbReference>
<dbReference type="NCBIfam" id="TIGR00012">
    <property type="entry name" value="L29"/>
    <property type="match status" value="1"/>
</dbReference>
<dbReference type="Pfam" id="PF00831">
    <property type="entry name" value="Ribosomal_L29"/>
    <property type="match status" value="1"/>
</dbReference>
<dbReference type="SUPFAM" id="SSF46561">
    <property type="entry name" value="Ribosomal protein L29 (L29p)"/>
    <property type="match status" value="1"/>
</dbReference>
<name>RL29_WOLPP</name>
<gene>
    <name evidence="1" type="primary">rpmC</name>
    <name type="ordered locus">WP1174</name>
</gene>
<keyword id="KW-0687">Ribonucleoprotein</keyword>
<keyword id="KW-0689">Ribosomal protein</keyword>
<organism>
    <name type="scientific">Wolbachia pipientis subsp. Culex pipiens (strain wPip)</name>
    <dbReference type="NCBI Taxonomy" id="570417"/>
    <lineage>
        <taxon>Bacteria</taxon>
        <taxon>Pseudomonadati</taxon>
        <taxon>Pseudomonadota</taxon>
        <taxon>Alphaproteobacteria</taxon>
        <taxon>Rickettsiales</taxon>
        <taxon>Anaplasmataceae</taxon>
        <taxon>Wolbachieae</taxon>
        <taxon>Wolbachia</taxon>
    </lineage>
</organism>
<feature type="chain" id="PRO_1000121838" description="Large ribosomal subunit protein uL29">
    <location>
        <begin position="1"/>
        <end position="67"/>
    </location>
</feature>
<evidence type="ECO:0000255" key="1">
    <source>
        <dbReference type="HAMAP-Rule" id="MF_00374"/>
    </source>
</evidence>
<evidence type="ECO:0000305" key="2"/>
<sequence length="67" mass="7795">MDIVKFESESSQGLHELLVNLRKEFVNLAFQKKLGQCNNFSRFSLIRKSIARSLTVLNRRKREGKNA</sequence>
<reference key="1">
    <citation type="journal article" date="2008" name="Mol. Biol. Evol.">
        <title>Genome evolution of Wolbachia strain wPip from the Culex pipiens group.</title>
        <authorList>
            <person name="Klasson L."/>
            <person name="Walker T."/>
            <person name="Sebaihia M."/>
            <person name="Sanders M.J."/>
            <person name="Quail M.A."/>
            <person name="Lord A."/>
            <person name="Sanders S."/>
            <person name="Earl J."/>
            <person name="O'Neill S.L."/>
            <person name="Thomson N."/>
            <person name="Sinkins S.P."/>
            <person name="Parkhill J."/>
        </authorList>
    </citation>
    <scope>NUCLEOTIDE SEQUENCE [LARGE SCALE GENOMIC DNA]</scope>
    <source>
        <strain>wPip</strain>
    </source>
</reference>
<proteinExistence type="inferred from homology"/>
<protein>
    <recommendedName>
        <fullName evidence="1">Large ribosomal subunit protein uL29</fullName>
    </recommendedName>
    <alternativeName>
        <fullName evidence="2">50S ribosomal protein L29</fullName>
    </alternativeName>
</protein>